<gene>
    <name type="ordered locus">NGR_a00740</name>
    <name type="ORF">y4xO</name>
</gene>
<reference key="1">
    <citation type="journal article" date="1997" name="Nature">
        <title>Molecular basis of symbiosis between Rhizobium and legumes.</title>
        <authorList>
            <person name="Freiberg C.A."/>
            <person name="Fellay R."/>
            <person name="Bairoch A."/>
            <person name="Broughton W.J."/>
            <person name="Rosenthal A."/>
            <person name="Perret X."/>
        </authorList>
    </citation>
    <scope>NUCLEOTIDE SEQUENCE [LARGE SCALE GENOMIC DNA]</scope>
    <source>
        <strain>NBRC 101917 / NGR234</strain>
    </source>
</reference>
<reference key="2">
    <citation type="journal article" date="2009" name="Appl. Environ. Microbiol.">
        <title>Rhizobium sp. strain NGR234 possesses a remarkable number of secretion systems.</title>
        <authorList>
            <person name="Schmeisser C."/>
            <person name="Liesegang H."/>
            <person name="Krysciak D."/>
            <person name="Bakkou N."/>
            <person name="Le Quere A."/>
            <person name="Wollherr A."/>
            <person name="Heinemeyer I."/>
            <person name="Morgenstern B."/>
            <person name="Pommerening-Roeser A."/>
            <person name="Flores M."/>
            <person name="Palacios R."/>
            <person name="Brenner S."/>
            <person name="Gottschalk G."/>
            <person name="Schmitz R.A."/>
            <person name="Broughton W.J."/>
            <person name="Perret X."/>
            <person name="Strittmatter A.W."/>
            <person name="Streit W.R."/>
        </authorList>
    </citation>
    <scope>NUCLEOTIDE SEQUENCE [LARGE SCALE GENOMIC DNA]</scope>
    <source>
        <strain>NBRC 101917 / NGR234</strain>
    </source>
</reference>
<protein>
    <recommendedName>
        <fullName>Uncharacterized protein y4xO</fullName>
    </recommendedName>
</protein>
<accession>P55707</accession>
<keyword id="KW-0614">Plasmid</keyword>
<keyword id="KW-1185">Reference proteome</keyword>
<sequence>MKVTICGAGRTGHLNAVLFKQNPGIDVSVLTTSATVAARWASGDGLWQAVTRDGRTLSARPDYIGTDPSAALDNADMVLITQPAQARSALLHRIAPYLPTDKSVYIGAIPGFCGFDWLAAKVLSGRDNVVIWGMKDVPHIAYDLIAGQRVRMGGAKAELFVALHRRESAASAAALMAMLNHIYEAPVNLLKDYLEITLTPGNALMHPAVLYALIGPGAPWEKRPFDEALCWWSDCPQAGAELLEACDAENQAIRRASEARLGIDLSSVKPLQQELIEAYGDQIGDDRTMYTLLRTNRAYAGIPAPLVPNPHGPGLVIDRGSRAFHEDIAFGQALLVTMAERLEATVPAIAKIYRWACDYHGKLAAGTPDYVPADWPEAA</sequence>
<geneLocation type="plasmid">
    <name>sym pNGR234a</name>
</geneLocation>
<dbReference type="EMBL" id="U00090">
    <property type="protein sequence ID" value="AAB91938.1"/>
    <property type="molecule type" value="Genomic_DNA"/>
</dbReference>
<dbReference type="RefSeq" id="NP_444151.1">
    <property type="nucleotide sequence ID" value="NC_000914.2"/>
</dbReference>
<dbReference type="RefSeq" id="WP_010875115.1">
    <property type="nucleotide sequence ID" value="NC_000914.2"/>
</dbReference>
<dbReference type="SMR" id="P55707"/>
<dbReference type="KEGG" id="rhi:NGR_a00740"/>
<dbReference type="PATRIC" id="fig|394.7.peg.66"/>
<dbReference type="eggNOG" id="COG0240">
    <property type="taxonomic scope" value="Bacteria"/>
</dbReference>
<dbReference type="HOGENOM" id="CLU_041606_1_0_5"/>
<dbReference type="OrthoDB" id="7328149at2"/>
<dbReference type="Proteomes" id="UP000001054">
    <property type="component" value="Plasmid pNGR234a"/>
</dbReference>
<dbReference type="GO" id="GO:0016491">
    <property type="term" value="F:oxidoreductase activity"/>
    <property type="evidence" value="ECO:0007669"/>
    <property type="project" value="InterPro"/>
</dbReference>
<dbReference type="Gene3D" id="1.10.1040.10">
    <property type="entry name" value="N-(1-d-carboxylethyl)-l-norvaline Dehydrogenase, domain 2"/>
    <property type="match status" value="1"/>
</dbReference>
<dbReference type="Gene3D" id="3.40.50.720">
    <property type="entry name" value="NAD(P)-binding Rossmann-like Domain"/>
    <property type="match status" value="1"/>
</dbReference>
<dbReference type="InterPro" id="IPR008927">
    <property type="entry name" value="6-PGluconate_DH-like_C_sf"/>
</dbReference>
<dbReference type="InterPro" id="IPR013328">
    <property type="entry name" value="6PGD_dom2"/>
</dbReference>
<dbReference type="InterPro" id="IPR036291">
    <property type="entry name" value="NAD(P)-bd_dom_sf"/>
</dbReference>
<dbReference type="InterPro" id="IPR051729">
    <property type="entry name" value="Opine/Lysopine_DH"/>
</dbReference>
<dbReference type="InterPro" id="IPR003421">
    <property type="entry name" value="Opine_DH"/>
</dbReference>
<dbReference type="PANTHER" id="PTHR38015">
    <property type="entry name" value="BLR6086 PROTEIN"/>
    <property type="match status" value="1"/>
</dbReference>
<dbReference type="PANTHER" id="PTHR38015:SF1">
    <property type="entry name" value="OPINE DEHYDROGENASE DOMAIN-CONTAINING PROTEIN"/>
    <property type="match status" value="1"/>
</dbReference>
<dbReference type="Pfam" id="PF02317">
    <property type="entry name" value="Octopine_DH"/>
    <property type="match status" value="1"/>
</dbReference>
<dbReference type="SUPFAM" id="SSF48179">
    <property type="entry name" value="6-phosphogluconate dehydrogenase C-terminal domain-like"/>
    <property type="match status" value="1"/>
</dbReference>
<dbReference type="SUPFAM" id="SSF51735">
    <property type="entry name" value="NAD(P)-binding Rossmann-fold domains"/>
    <property type="match status" value="1"/>
</dbReference>
<feature type="chain" id="PRO_0000200969" description="Uncharacterized protein y4xO">
    <location>
        <begin position="1"/>
        <end position="379"/>
    </location>
</feature>
<proteinExistence type="predicted"/>
<name>Y4XO_SINFN</name>
<organism>
    <name type="scientific">Sinorhizobium fredii (strain NBRC 101917 / NGR234)</name>
    <dbReference type="NCBI Taxonomy" id="394"/>
    <lineage>
        <taxon>Bacteria</taxon>
        <taxon>Pseudomonadati</taxon>
        <taxon>Pseudomonadota</taxon>
        <taxon>Alphaproteobacteria</taxon>
        <taxon>Hyphomicrobiales</taxon>
        <taxon>Rhizobiaceae</taxon>
        <taxon>Sinorhizobium/Ensifer group</taxon>
        <taxon>Sinorhizobium</taxon>
    </lineage>
</organism>